<proteinExistence type="inferred from homology"/>
<sequence>MSGLPIATNLYFDAHFHRHGVKLLPNEFYTTREDMVLVTVLGSCVAACLHDPIGRIGGMNHFMLPDDGADPSAAASESMRYGAYAMEVLINELIKAGGRRERFEAKVFGGAAVLAGMTTINIGDRNADFVRRYLALERIRITAEDLQGVHPRKVAFMPHTGQAMVKKLRVQAPDVAAREAALAREAVDPHGERAPRVRPRVELFGTPAPKAQAKPRIELFGMRATQPATRKQEA</sequence>
<keyword id="KW-0145">Chemotaxis</keyword>
<keyword id="KW-0378">Hydrolase</keyword>
<gene>
    <name evidence="1" type="primary">cheD</name>
    <name type="ordered locus">BMA10247_3120</name>
</gene>
<comment type="function">
    <text evidence="1">Probably deamidates glutamine residues to glutamate on methyl-accepting chemotaxis receptors (MCPs), playing an important role in chemotaxis.</text>
</comment>
<comment type="catalytic activity">
    <reaction evidence="1">
        <text>L-glutaminyl-[protein] + H2O = L-glutamyl-[protein] + NH4(+)</text>
        <dbReference type="Rhea" id="RHEA:16441"/>
        <dbReference type="Rhea" id="RHEA-COMP:10207"/>
        <dbReference type="Rhea" id="RHEA-COMP:10208"/>
        <dbReference type="ChEBI" id="CHEBI:15377"/>
        <dbReference type="ChEBI" id="CHEBI:28938"/>
        <dbReference type="ChEBI" id="CHEBI:29973"/>
        <dbReference type="ChEBI" id="CHEBI:30011"/>
        <dbReference type="EC" id="3.5.1.44"/>
    </reaction>
</comment>
<comment type="similarity">
    <text evidence="1">Belongs to the CheD family.</text>
</comment>
<organism>
    <name type="scientific">Burkholderia mallei (strain NCTC 10247)</name>
    <dbReference type="NCBI Taxonomy" id="320389"/>
    <lineage>
        <taxon>Bacteria</taxon>
        <taxon>Pseudomonadati</taxon>
        <taxon>Pseudomonadota</taxon>
        <taxon>Betaproteobacteria</taxon>
        <taxon>Burkholderiales</taxon>
        <taxon>Burkholderiaceae</taxon>
        <taxon>Burkholderia</taxon>
        <taxon>pseudomallei group</taxon>
    </lineage>
</organism>
<reference key="1">
    <citation type="journal article" date="2010" name="Genome Biol. Evol.">
        <title>Continuing evolution of Burkholderia mallei through genome reduction and large-scale rearrangements.</title>
        <authorList>
            <person name="Losada L."/>
            <person name="Ronning C.M."/>
            <person name="DeShazer D."/>
            <person name="Woods D."/>
            <person name="Fedorova N."/>
            <person name="Kim H.S."/>
            <person name="Shabalina S.A."/>
            <person name="Pearson T.R."/>
            <person name="Brinkac L."/>
            <person name="Tan P."/>
            <person name="Nandi T."/>
            <person name="Crabtree J."/>
            <person name="Badger J."/>
            <person name="Beckstrom-Sternberg S."/>
            <person name="Saqib M."/>
            <person name="Schutzer S.E."/>
            <person name="Keim P."/>
            <person name="Nierman W.C."/>
        </authorList>
    </citation>
    <scope>NUCLEOTIDE SEQUENCE [LARGE SCALE GENOMIC DNA]</scope>
    <source>
        <strain>NCTC 10247</strain>
    </source>
</reference>
<feature type="chain" id="PRO_1000068544" description="Probable chemoreceptor glutamine deamidase CheD">
    <location>
        <begin position="1"/>
        <end position="234"/>
    </location>
</feature>
<name>CHED_BURM7</name>
<evidence type="ECO:0000255" key="1">
    <source>
        <dbReference type="HAMAP-Rule" id="MF_01440"/>
    </source>
</evidence>
<accession>A3MQV3</accession>
<dbReference type="EC" id="3.5.1.44" evidence="1"/>
<dbReference type="EMBL" id="CP000548">
    <property type="protein sequence ID" value="ABO04483.1"/>
    <property type="molecule type" value="Genomic_DNA"/>
</dbReference>
<dbReference type="RefSeq" id="WP_004198646.1">
    <property type="nucleotide sequence ID" value="NZ_CP007802.1"/>
</dbReference>
<dbReference type="SMR" id="A3MQV3"/>
<dbReference type="GeneID" id="92980525"/>
<dbReference type="KEGG" id="bmaz:BM44_240"/>
<dbReference type="KEGG" id="bmn:BMA10247_3120"/>
<dbReference type="PATRIC" id="fig|320389.8.peg.261"/>
<dbReference type="GO" id="GO:0050568">
    <property type="term" value="F:protein-glutamine glutaminase activity"/>
    <property type="evidence" value="ECO:0007669"/>
    <property type="project" value="UniProtKB-UniRule"/>
</dbReference>
<dbReference type="GO" id="GO:0006935">
    <property type="term" value="P:chemotaxis"/>
    <property type="evidence" value="ECO:0007669"/>
    <property type="project" value="UniProtKB-UniRule"/>
</dbReference>
<dbReference type="CDD" id="cd16352">
    <property type="entry name" value="CheD"/>
    <property type="match status" value="1"/>
</dbReference>
<dbReference type="Gene3D" id="3.30.1330.200">
    <property type="match status" value="1"/>
</dbReference>
<dbReference type="HAMAP" id="MF_01440">
    <property type="entry name" value="CheD"/>
    <property type="match status" value="1"/>
</dbReference>
<dbReference type="InterPro" id="IPR038592">
    <property type="entry name" value="CheD-like_sf"/>
</dbReference>
<dbReference type="InterPro" id="IPR005659">
    <property type="entry name" value="Chemorcpt_Glu_NH3ase_CheD"/>
</dbReference>
<dbReference type="InterPro" id="IPR011324">
    <property type="entry name" value="Cytotoxic_necrot_fac-like_cat"/>
</dbReference>
<dbReference type="NCBIfam" id="NF010013">
    <property type="entry name" value="PRK13487.1"/>
    <property type="match status" value="1"/>
</dbReference>
<dbReference type="NCBIfam" id="NF010014">
    <property type="entry name" value="PRK13489.1"/>
    <property type="match status" value="1"/>
</dbReference>
<dbReference type="PANTHER" id="PTHR35147">
    <property type="entry name" value="CHEMORECEPTOR GLUTAMINE DEAMIDASE CHED-RELATED"/>
    <property type="match status" value="1"/>
</dbReference>
<dbReference type="PANTHER" id="PTHR35147:SF2">
    <property type="entry name" value="CHEMORECEPTOR GLUTAMINE DEAMIDASE CHED-RELATED"/>
    <property type="match status" value="1"/>
</dbReference>
<dbReference type="Pfam" id="PF03975">
    <property type="entry name" value="CheD"/>
    <property type="match status" value="1"/>
</dbReference>
<dbReference type="SUPFAM" id="SSF64438">
    <property type="entry name" value="CNF1/YfiH-like putative cysteine hydrolases"/>
    <property type="match status" value="1"/>
</dbReference>
<protein>
    <recommendedName>
        <fullName evidence="1">Probable chemoreceptor glutamine deamidase CheD</fullName>
        <ecNumber evidence="1">3.5.1.44</ecNumber>
    </recommendedName>
</protein>